<keyword id="KW-0010">Activator</keyword>
<keyword id="KW-0238">DNA-binding</keyword>
<keyword id="KW-0371">Homeobox</keyword>
<keyword id="KW-0440">LIM domain</keyword>
<keyword id="KW-0479">Metal-binding</keyword>
<keyword id="KW-0539">Nucleus</keyword>
<keyword id="KW-1185">Reference proteome</keyword>
<keyword id="KW-0677">Repeat</keyword>
<keyword id="KW-0804">Transcription</keyword>
<keyword id="KW-0805">Transcription regulation</keyword>
<keyword id="KW-0862">Zinc</keyword>
<comment type="function">
    <text evidence="5">Acts as a transcriptional activator. Stimulates the promoter of the alpha-glycoprotein gene. Transcriptional regulatory protein involved in the control of cell differentiation in developing lymphoid and neural cell types.</text>
</comment>
<comment type="subunit">
    <text evidence="5 6">Interacts (via LIM domains) with CITED2 (PubMed:10593900). Interacts with POU4F2 isoform 1 (PubMed:24643061).</text>
</comment>
<comment type="subcellular location">
    <subcellularLocation>
        <location evidence="7">Nucleus</location>
    </subcellularLocation>
</comment>
<comment type="domain">
    <text>LIM domains are necessary for transcription activation.</text>
</comment>
<protein>
    <recommendedName>
        <fullName>LIM/homeobox protein Lhx2</fullName>
        <shortName>Homeobox protein LH-2</shortName>
        <shortName>LIM homeobox protein 2</shortName>
    </recommendedName>
</protein>
<dbReference type="EMBL" id="AF124734">
    <property type="protein sequence ID" value="AAD20012.1"/>
    <property type="molecule type" value="mRNA"/>
</dbReference>
<dbReference type="EMBL" id="BC055741">
    <property type="protein sequence ID" value="AAH55741.1"/>
    <property type="molecule type" value="mRNA"/>
</dbReference>
<dbReference type="CCDS" id="CCDS16008.1"/>
<dbReference type="RefSeq" id="NP_034840.1">
    <property type="nucleotide sequence ID" value="NM_010710.5"/>
</dbReference>
<dbReference type="SMR" id="Q9Z0S2"/>
<dbReference type="BioGRID" id="201155">
    <property type="interactions" value="6"/>
</dbReference>
<dbReference type="FunCoup" id="Q9Z0S2">
    <property type="interactions" value="2057"/>
</dbReference>
<dbReference type="IntAct" id="Q9Z0S2">
    <property type="interactions" value="6"/>
</dbReference>
<dbReference type="STRING" id="10090.ENSMUSP00000000253"/>
<dbReference type="PhosphoSitePlus" id="Q9Z0S2"/>
<dbReference type="PaxDb" id="10090-ENSMUSP00000000253"/>
<dbReference type="ProteomicsDB" id="291945"/>
<dbReference type="Antibodypedia" id="16286">
    <property type="antibodies" value="391 antibodies from 34 providers"/>
</dbReference>
<dbReference type="DNASU" id="16870"/>
<dbReference type="Ensembl" id="ENSMUST00000000253.6">
    <property type="protein sequence ID" value="ENSMUSP00000000253.6"/>
    <property type="gene ID" value="ENSMUSG00000000247.12"/>
</dbReference>
<dbReference type="GeneID" id="16870"/>
<dbReference type="KEGG" id="mmu:16870"/>
<dbReference type="UCSC" id="uc008jnk.2">
    <property type="organism name" value="mouse"/>
</dbReference>
<dbReference type="AGR" id="MGI:96785"/>
<dbReference type="CTD" id="9355"/>
<dbReference type="MGI" id="MGI:96785">
    <property type="gene designation" value="Lhx2"/>
</dbReference>
<dbReference type="VEuPathDB" id="HostDB:ENSMUSG00000000247"/>
<dbReference type="eggNOG" id="KOG0490">
    <property type="taxonomic scope" value="Eukaryota"/>
</dbReference>
<dbReference type="GeneTree" id="ENSGT00940000158540"/>
<dbReference type="InParanoid" id="Q9Z0S2"/>
<dbReference type="OMA" id="LHFNHGE"/>
<dbReference type="OrthoDB" id="9990008at2759"/>
<dbReference type="PhylomeDB" id="Q9Z0S2"/>
<dbReference type="TreeFam" id="TF315442"/>
<dbReference type="BioGRID-ORCS" id="16870">
    <property type="hits" value="1 hit in 80 CRISPR screens"/>
</dbReference>
<dbReference type="ChiTaRS" id="Lhx2">
    <property type="organism name" value="mouse"/>
</dbReference>
<dbReference type="PRO" id="PR:Q9Z0S2"/>
<dbReference type="Proteomes" id="UP000000589">
    <property type="component" value="Chromosome 2"/>
</dbReference>
<dbReference type="RNAct" id="Q9Z0S2">
    <property type="molecule type" value="protein"/>
</dbReference>
<dbReference type="Bgee" id="ENSMUSG00000000247">
    <property type="expression patterns" value="Expressed in ventricular zone and 138 other cell types or tissues"/>
</dbReference>
<dbReference type="ExpressionAtlas" id="Q9Z0S2">
    <property type="expression patterns" value="baseline and differential"/>
</dbReference>
<dbReference type="GO" id="GO:0005654">
    <property type="term" value="C:nucleoplasm"/>
    <property type="evidence" value="ECO:0000304"/>
    <property type="project" value="Reactome"/>
</dbReference>
<dbReference type="GO" id="GO:0005634">
    <property type="term" value="C:nucleus"/>
    <property type="evidence" value="ECO:0000314"/>
    <property type="project" value="MGI"/>
</dbReference>
<dbReference type="GO" id="GO:0003682">
    <property type="term" value="F:chromatin binding"/>
    <property type="evidence" value="ECO:0000314"/>
    <property type="project" value="MGI"/>
</dbReference>
<dbReference type="GO" id="GO:0001228">
    <property type="term" value="F:DNA-binding transcription activator activity, RNA polymerase II-specific"/>
    <property type="evidence" value="ECO:0000314"/>
    <property type="project" value="NTNU_SB"/>
</dbReference>
<dbReference type="GO" id="GO:0046872">
    <property type="term" value="F:metal ion binding"/>
    <property type="evidence" value="ECO:0007669"/>
    <property type="project" value="UniProtKB-KW"/>
</dbReference>
<dbReference type="GO" id="GO:0000978">
    <property type="term" value="F:RNA polymerase II cis-regulatory region sequence-specific DNA binding"/>
    <property type="evidence" value="ECO:0000315"/>
    <property type="project" value="UniProtKB"/>
</dbReference>
<dbReference type="GO" id="GO:0043565">
    <property type="term" value="F:sequence-specific DNA binding"/>
    <property type="evidence" value="ECO:0000314"/>
    <property type="project" value="MGI"/>
</dbReference>
<dbReference type="GO" id="GO:0048646">
    <property type="term" value="P:anatomical structure formation involved in morphogenesis"/>
    <property type="evidence" value="ECO:0000315"/>
    <property type="project" value="MGI"/>
</dbReference>
<dbReference type="GO" id="GO:0048675">
    <property type="term" value="P:axon extension"/>
    <property type="evidence" value="ECO:0000314"/>
    <property type="project" value="MGI"/>
</dbReference>
<dbReference type="GO" id="GO:0007411">
    <property type="term" value="P:axon guidance"/>
    <property type="evidence" value="ECO:0000315"/>
    <property type="project" value="CACAO"/>
</dbReference>
<dbReference type="GO" id="GO:0007420">
    <property type="term" value="P:brain development"/>
    <property type="evidence" value="ECO:0000315"/>
    <property type="project" value="MGI"/>
</dbReference>
<dbReference type="GO" id="GO:0021987">
    <property type="term" value="P:cerebral cortex development"/>
    <property type="evidence" value="ECO:0000315"/>
    <property type="project" value="UniProtKB"/>
</dbReference>
<dbReference type="GO" id="GO:0009953">
    <property type="term" value="P:dorsal/ventral pattern formation"/>
    <property type="evidence" value="ECO:0000315"/>
    <property type="project" value="MGI"/>
</dbReference>
<dbReference type="GO" id="GO:0001942">
    <property type="term" value="P:hair follicle development"/>
    <property type="evidence" value="ECO:0000315"/>
    <property type="project" value="MGI"/>
</dbReference>
<dbReference type="GO" id="GO:0045199">
    <property type="term" value="P:maintenance of epithelial cell apical/basal polarity"/>
    <property type="evidence" value="ECO:0000315"/>
    <property type="project" value="MGI"/>
</dbReference>
<dbReference type="GO" id="GO:0007498">
    <property type="term" value="P:mesoderm development"/>
    <property type="evidence" value="ECO:0000315"/>
    <property type="project" value="MGI"/>
</dbReference>
<dbReference type="GO" id="GO:0045814">
    <property type="term" value="P:negative regulation of gene expression, epigenetic"/>
    <property type="evidence" value="ECO:0000315"/>
    <property type="project" value="UniProtKB"/>
</dbReference>
<dbReference type="GO" id="GO:0050768">
    <property type="term" value="P:negative regulation of neurogenesis"/>
    <property type="evidence" value="ECO:0000315"/>
    <property type="project" value="UniProtKB"/>
</dbReference>
<dbReference type="GO" id="GO:0007399">
    <property type="term" value="P:nervous system development"/>
    <property type="evidence" value="ECO:0000315"/>
    <property type="project" value="MGI"/>
</dbReference>
<dbReference type="GO" id="GO:0001843">
    <property type="term" value="P:neural tube closure"/>
    <property type="evidence" value="ECO:0000315"/>
    <property type="project" value="MGI"/>
</dbReference>
<dbReference type="GO" id="GO:0022008">
    <property type="term" value="P:neurogenesis"/>
    <property type="evidence" value="ECO:0000314"/>
    <property type="project" value="MGI"/>
</dbReference>
<dbReference type="GO" id="GO:0030182">
    <property type="term" value="P:neuron differentiation"/>
    <property type="evidence" value="ECO:0000315"/>
    <property type="project" value="MGI"/>
</dbReference>
<dbReference type="GO" id="GO:0021772">
    <property type="term" value="P:olfactory bulb development"/>
    <property type="evidence" value="ECO:0000315"/>
    <property type="project" value="MGI"/>
</dbReference>
<dbReference type="GO" id="GO:0045893">
    <property type="term" value="P:positive regulation of DNA-templated transcription"/>
    <property type="evidence" value="ECO:0000314"/>
    <property type="project" value="UniProtKB"/>
</dbReference>
<dbReference type="GO" id="GO:2000179">
    <property type="term" value="P:positive regulation of neural precursor cell proliferation"/>
    <property type="evidence" value="ECO:0000315"/>
    <property type="project" value="UniProtKB"/>
</dbReference>
<dbReference type="GO" id="GO:0045944">
    <property type="term" value="P:positive regulation of transcription by RNA polymerase II"/>
    <property type="evidence" value="ECO:0000314"/>
    <property type="project" value="NTNU_SB"/>
</dbReference>
<dbReference type="GO" id="GO:0060041">
    <property type="term" value="P:retina development in camera-type eye"/>
    <property type="evidence" value="ECO:0000316"/>
    <property type="project" value="MGI"/>
</dbReference>
<dbReference type="GO" id="GO:0021537">
    <property type="term" value="P:telencephalon development"/>
    <property type="evidence" value="ECO:0000315"/>
    <property type="project" value="MGI"/>
</dbReference>
<dbReference type="GO" id="GO:0021978">
    <property type="term" value="P:telencephalon regionalization"/>
    <property type="evidence" value="ECO:0000315"/>
    <property type="project" value="MGI"/>
</dbReference>
<dbReference type="CDD" id="cd00086">
    <property type="entry name" value="homeodomain"/>
    <property type="match status" value="1"/>
</dbReference>
<dbReference type="CDD" id="cd09469">
    <property type="entry name" value="LIM1_Lhx2"/>
    <property type="match status" value="1"/>
</dbReference>
<dbReference type="CDD" id="cd09377">
    <property type="entry name" value="LIM2_Lhx2_Lhx9"/>
    <property type="match status" value="1"/>
</dbReference>
<dbReference type="FunFam" id="1.10.10.60:FF:000027">
    <property type="entry name" value="LIM/homeobox protein Lhx9"/>
    <property type="match status" value="1"/>
</dbReference>
<dbReference type="FunFam" id="2.10.110.10:FF:000039">
    <property type="entry name" value="LIM/homeobox protein Lhx9 isoform 2"/>
    <property type="match status" value="1"/>
</dbReference>
<dbReference type="FunFam" id="2.10.110.10:FF:000033">
    <property type="entry name" value="LIM/homeobox protein Lhx9 isoform X2"/>
    <property type="match status" value="1"/>
</dbReference>
<dbReference type="Gene3D" id="2.10.110.10">
    <property type="entry name" value="Cysteine Rich Protein"/>
    <property type="match status" value="2"/>
</dbReference>
<dbReference type="Gene3D" id="1.10.10.60">
    <property type="entry name" value="Homeodomain-like"/>
    <property type="match status" value="1"/>
</dbReference>
<dbReference type="InterPro" id="IPR001356">
    <property type="entry name" value="HD"/>
</dbReference>
<dbReference type="InterPro" id="IPR017970">
    <property type="entry name" value="Homeobox_CS"/>
</dbReference>
<dbReference type="InterPro" id="IPR009057">
    <property type="entry name" value="Homeodomain-like_sf"/>
</dbReference>
<dbReference type="InterPro" id="IPR050453">
    <property type="entry name" value="LIM_Homeobox_TF"/>
</dbReference>
<dbReference type="InterPro" id="IPR001781">
    <property type="entry name" value="Znf_LIM"/>
</dbReference>
<dbReference type="PANTHER" id="PTHR24208">
    <property type="entry name" value="LIM/HOMEOBOX PROTEIN LHX"/>
    <property type="match status" value="1"/>
</dbReference>
<dbReference type="PANTHER" id="PTHR24208:SF80">
    <property type="entry name" value="LIM_HOMEOBOX PROTEIN LHX2"/>
    <property type="match status" value="1"/>
</dbReference>
<dbReference type="Pfam" id="PF00046">
    <property type="entry name" value="Homeodomain"/>
    <property type="match status" value="1"/>
</dbReference>
<dbReference type="Pfam" id="PF00412">
    <property type="entry name" value="LIM"/>
    <property type="match status" value="2"/>
</dbReference>
<dbReference type="SMART" id="SM00389">
    <property type="entry name" value="HOX"/>
    <property type="match status" value="1"/>
</dbReference>
<dbReference type="SMART" id="SM00132">
    <property type="entry name" value="LIM"/>
    <property type="match status" value="2"/>
</dbReference>
<dbReference type="SUPFAM" id="SSF57716">
    <property type="entry name" value="Glucocorticoid receptor-like (DNA-binding domain)"/>
    <property type="match status" value="2"/>
</dbReference>
<dbReference type="SUPFAM" id="SSF46689">
    <property type="entry name" value="Homeodomain-like"/>
    <property type="match status" value="1"/>
</dbReference>
<dbReference type="PROSITE" id="PS00027">
    <property type="entry name" value="HOMEOBOX_1"/>
    <property type="match status" value="1"/>
</dbReference>
<dbReference type="PROSITE" id="PS50071">
    <property type="entry name" value="HOMEOBOX_2"/>
    <property type="match status" value="1"/>
</dbReference>
<dbReference type="PROSITE" id="PS00478">
    <property type="entry name" value="LIM_DOMAIN_1"/>
    <property type="match status" value="2"/>
</dbReference>
<dbReference type="PROSITE" id="PS50023">
    <property type="entry name" value="LIM_DOMAIN_2"/>
    <property type="match status" value="2"/>
</dbReference>
<evidence type="ECO:0000255" key="1"/>
<evidence type="ECO:0000255" key="2">
    <source>
        <dbReference type="PROSITE-ProRule" id="PRU00108"/>
    </source>
</evidence>
<evidence type="ECO:0000255" key="3">
    <source>
        <dbReference type="PROSITE-ProRule" id="PRU00125"/>
    </source>
</evidence>
<evidence type="ECO:0000256" key="4">
    <source>
        <dbReference type="SAM" id="MobiDB-lite"/>
    </source>
</evidence>
<evidence type="ECO:0000269" key="5">
    <source>
    </source>
</evidence>
<evidence type="ECO:0000269" key="6">
    <source>
    </source>
</evidence>
<evidence type="ECO:0000305" key="7"/>
<organism>
    <name type="scientific">Mus musculus</name>
    <name type="common">Mouse</name>
    <dbReference type="NCBI Taxonomy" id="10090"/>
    <lineage>
        <taxon>Eukaryota</taxon>
        <taxon>Metazoa</taxon>
        <taxon>Chordata</taxon>
        <taxon>Craniata</taxon>
        <taxon>Vertebrata</taxon>
        <taxon>Euteleostomi</taxon>
        <taxon>Mammalia</taxon>
        <taxon>Eutheria</taxon>
        <taxon>Euarchontoglires</taxon>
        <taxon>Glires</taxon>
        <taxon>Rodentia</taxon>
        <taxon>Myomorpha</taxon>
        <taxon>Muroidea</taxon>
        <taxon>Muridae</taxon>
        <taxon>Murinae</taxon>
        <taxon>Mus</taxon>
        <taxon>Mus</taxon>
    </lineage>
</organism>
<proteinExistence type="evidence at protein level"/>
<sequence>MLFHSLSGPEVHGVIDEMDRRAKSEAPAISSAIDRGDTETTMPSISSDRAALCAGCGGKISDRYYLLAVDKQWHMRCLKCCECKLNLESELTCFSKDGSIYCKEDYYRRFSVQRCARCHLGISASEMVMRARDLVYHLNCFTCTTCNKMLTTGDHFGMKDSLVYCRLHFEALLQGEYPAHFNHADVAAAAAAAAAAKSAGLGSAGANPLGLPYYNGVGTVQKGRPRKRKSPGPGADLAAYNAALSCNENDAEHLDRDQPYPSSQKTKRMRTSFKHHQLRTMKSYFAINHNPDAKDLKQLAQKTGLTKRVLQVWFQNARAKFRRNLLRQENTGVDKTSDATLQTGTPSGPASELSNASLSPSSTPTTLTDLTSPTLPTVTSVLTSVPGNLEGHEPHSPSQTTLTNLF</sequence>
<reference key="1">
    <citation type="journal article" date="1999" name="Proc. Natl. Acad. Sci. U.S.A.">
        <title>Conservation of the expression and function of apterous orthologs in Drosophila and mammals.</title>
        <authorList>
            <person name="Rincon-Limas D.E."/>
            <person name="Lu C.-H."/>
            <person name="Canal I."/>
            <person name="Calleja M."/>
            <person name="Rodriguez-Esteban C."/>
            <person name="Izpisua-Belmonte J.-C."/>
            <person name="Botas J."/>
        </authorList>
    </citation>
    <scope>NUCLEOTIDE SEQUENCE [MRNA]</scope>
</reference>
<reference key="2">
    <citation type="journal article" date="2004" name="Genome Res.">
        <title>The status, quality, and expansion of the NIH full-length cDNA project: the Mammalian Gene Collection (MGC).</title>
        <authorList>
            <consortium name="The MGC Project Team"/>
        </authorList>
    </citation>
    <scope>NUCLEOTIDE SEQUENCE [LARGE SCALE MRNA]</scope>
    <source>
        <strain>C57BL/6J</strain>
        <tissue>Brain</tissue>
    </source>
</reference>
<reference key="3">
    <citation type="journal article" date="1999" name="J. Biol. Chem.">
        <title>MRG1 binds to the LIM domain of Lhx2 and may function as a coactivator to stimulate glycoprotein hormone alpha-subunit gene expression.</title>
        <authorList>
            <person name="Glenn D.J."/>
            <person name="Maurer R.A."/>
        </authorList>
    </citation>
    <scope>FUNCTION</scope>
    <scope>INTERACTION WITH CITED2</scope>
    <scope>MUTAGENESIS OF CYS-53 AND CYS-56</scope>
</reference>
<reference key="4">
    <citation type="journal article" date="2014" name="PLoS ONE">
        <title>Isl1 and Pou4f2 form a complex to regulate target genes in developing retinal ganglion cells.</title>
        <authorList>
            <person name="Li R."/>
            <person name="Wu F."/>
            <person name="Ruonala R."/>
            <person name="Sapkota D."/>
            <person name="Hu Z."/>
            <person name="Mu X."/>
        </authorList>
    </citation>
    <scope>INTERACTION WITH POU4F2</scope>
</reference>
<accession>Q9Z0S2</accession>
<feature type="chain" id="PRO_0000075779" description="LIM/homeobox protein Lhx2">
    <location>
        <begin position="1"/>
        <end position="406"/>
    </location>
</feature>
<feature type="domain" description="LIM zinc-binding 1" evidence="3">
    <location>
        <begin position="53"/>
        <end position="105"/>
    </location>
</feature>
<feature type="domain" description="LIM zinc-binding 2" evidence="3">
    <location>
        <begin position="115"/>
        <end position="168"/>
    </location>
</feature>
<feature type="DNA-binding region" description="Homeobox" evidence="2">
    <location>
        <begin position="266"/>
        <end position="325"/>
    </location>
</feature>
<feature type="region of interest" description="Disordered" evidence="4">
    <location>
        <begin position="250"/>
        <end position="270"/>
    </location>
</feature>
<feature type="region of interest" description="Disordered" evidence="4">
    <location>
        <begin position="328"/>
        <end position="375"/>
    </location>
</feature>
<feature type="region of interest" description="Disordered" evidence="4">
    <location>
        <begin position="387"/>
        <end position="406"/>
    </location>
</feature>
<feature type="short sequence motif" description="Nuclear localization signal" evidence="1">
    <location>
        <begin position="307"/>
        <end position="323"/>
    </location>
</feature>
<feature type="compositionally biased region" description="Polar residues" evidence="4">
    <location>
        <begin position="328"/>
        <end position="356"/>
    </location>
</feature>
<feature type="compositionally biased region" description="Low complexity" evidence="4">
    <location>
        <begin position="357"/>
        <end position="375"/>
    </location>
</feature>
<feature type="compositionally biased region" description="Polar residues" evidence="4">
    <location>
        <begin position="396"/>
        <end position="406"/>
    </location>
</feature>
<feature type="mutagenesis site" description="Reduces transcriptional activation; when associated with A-56." evidence="5">
    <original>C</original>
    <variation>A</variation>
    <location>
        <position position="53"/>
    </location>
</feature>
<feature type="mutagenesis site" description="Reduces transcriptional activation; when associated with A-53." evidence="5">
    <original>C</original>
    <variation>A</variation>
    <location>
        <position position="56"/>
    </location>
</feature>
<name>LHX2_MOUSE</name>
<gene>
    <name type="primary">Lhx2</name>
</gene>